<name>RHOF_MOUSE</name>
<accession>Q8BYP3</accession>
<reference key="1">
    <citation type="journal article" date="2005" name="Science">
        <title>The transcriptional landscape of the mammalian genome.</title>
        <authorList>
            <person name="Carninci P."/>
            <person name="Kasukawa T."/>
            <person name="Katayama S."/>
            <person name="Gough J."/>
            <person name="Frith M.C."/>
            <person name="Maeda N."/>
            <person name="Oyama R."/>
            <person name="Ravasi T."/>
            <person name="Lenhard B."/>
            <person name="Wells C."/>
            <person name="Kodzius R."/>
            <person name="Shimokawa K."/>
            <person name="Bajic V.B."/>
            <person name="Brenner S.E."/>
            <person name="Batalov S."/>
            <person name="Forrest A.R."/>
            <person name="Zavolan M."/>
            <person name="Davis M.J."/>
            <person name="Wilming L.G."/>
            <person name="Aidinis V."/>
            <person name="Allen J.E."/>
            <person name="Ambesi-Impiombato A."/>
            <person name="Apweiler R."/>
            <person name="Aturaliya R.N."/>
            <person name="Bailey T.L."/>
            <person name="Bansal M."/>
            <person name="Baxter L."/>
            <person name="Beisel K.W."/>
            <person name="Bersano T."/>
            <person name="Bono H."/>
            <person name="Chalk A.M."/>
            <person name="Chiu K.P."/>
            <person name="Choudhary V."/>
            <person name="Christoffels A."/>
            <person name="Clutterbuck D.R."/>
            <person name="Crowe M.L."/>
            <person name="Dalla E."/>
            <person name="Dalrymple B.P."/>
            <person name="de Bono B."/>
            <person name="Della Gatta G."/>
            <person name="di Bernardo D."/>
            <person name="Down T."/>
            <person name="Engstrom P."/>
            <person name="Fagiolini M."/>
            <person name="Faulkner G."/>
            <person name="Fletcher C.F."/>
            <person name="Fukushima T."/>
            <person name="Furuno M."/>
            <person name="Futaki S."/>
            <person name="Gariboldi M."/>
            <person name="Georgii-Hemming P."/>
            <person name="Gingeras T.R."/>
            <person name="Gojobori T."/>
            <person name="Green R.E."/>
            <person name="Gustincich S."/>
            <person name="Harbers M."/>
            <person name="Hayashi Y."/>
            <person name="Hensch T.K."/>
            <person name="Hirokawa N."/>
            <person name="Hill D."/>
            <person name="Huminiecki L."/>
            <person name="Iacono M."/>
            <person name="Ikeo K."/>
            <person name="Iwama A."/>
            <person name="Ishikawa T."/>
            <person name="Jakt M."/>
            <person name="Kanapin A."/>
            <person name="Katoh M."/>
            <person name="Kawasawa Y."/>
            <person name="Kelso J."/>
            <person name="Kitamura H."/>
            <person name="Kitano H."/>
            <person name="Kollias G."/>
            <person name="Krishnan S.P."/>
            <person name="Kruger A."/>
            <person name="Kummerfeld S.K."/>
            <person name="Kurochkin I.V."/>
            <person name="Lareau L.F."/>
            <person name="Lazarevic D."/>
            <person name="Lipovich L."/>
            <person name="Liu J."/>
            <person name="Liuni S."/>
            <person name="McWilliam S."/>
            <person name="Madan Babu M."/>
            <person name="Madera M."/>
            <person name="Marchionni L."/>
            <person name="Matsuda H."/>
            <person name="Matsuzawa S."/>
            <person name="Miki H."/>
            <person name="Mignone F."/>
            <person name="Miyake S."/>
            <person name="Morris K."/>
            <person name="Mottagui-Tabar S."/>
            <person name="Mulder N."/>
            <person name="Nakano N."/>
            <person name="Nakauchi H."/>
            <person name="Ng P."/>
            <person name="Nilsson R."/>
            <person name="Nishiguchi S."/>
            <person name="Nishikawa S."/>
            <person name="Nori F."/>
            <person name="Ohara O."/>
            <person name="Okazaki Y."/>
            <person name="Orlando V."/>
            <person name="Pang K.C."/>
            <person name="Pavan W.J."/>
            <person name="Pavesi G."/>
            <person name="Pesole G."/>
            <person name="Petrovsky N."/>
            <person name="Piazza S."/>
            <person name="Reed J."/>
            <person name="Reid J.F."/>
            <person name="Ring B.Z."/>
            <person name="Ringwald M."/>
            <person name="Rost B."/>
            <person name="Ruan Y."/>
            <person name="Salzberg S.L."/>
            <person name="Sandelin A."/>
            <person name="Schneider C."/>
            <person name="Schoenbach C."/>
            <person name="Sekiguchi K."/>
            <person name="Semple C.A."/>
            <person name="Seno S."/>
            <person name="Sessa L."/>
            <person name="Sheng Y."/>
            <person name="Shibata Y."/>
            <person name="Shimada H."/>
            <person name="Shimada K."/>
            <person name="Silva D."/>
            <person name="Sinclair B."/>
            <person name="Sperling S."/>
            <person name="Stupka E."/>
            <person name="Sugiura K."/>
            <person name="Sultana R."/>
            <person name="Takenaka Y."/>
            <person name="Taki K."/>
            <person name="Tammoja K."/>
            <person name="Tan S.L."/>
            <person name="Tang S."/>
            <person name="Taylor M.S."/>
            <person name="Tegner J."/>
            <person name="Teichmann S.A."/>
            <person name="Ueda H.R."/>
            <person name="van Nimwegen E."/>
            <person name="Verardo R."/>
            <person name="Wei C.L."/>
            <person name="Yagi K."/>
            <person name="Yamanishi H."/>
            <person name="Zabarovsky E."/>
            <person name="Zhu S."/>
            <person name="Zimmer A."/>
            <person name="Hide W."/>
            <person name="Bult C."/>
            <person name="Grimmond S.M."/>
            <person name="Teasdale R.D."/>
            <person name="Liu E.T."/>
            <person name="Brusic V."/>
            <person name="Quackenbush J."/>
            <person name="Wahlestedt C."/>
            <person name="Mattick J.S."/>
            <person name="Hume D.A."/>
            <person name="Kai C."/>
            <person name="Sasaki D."/>
            <person name="Tomaru Y."/>
            <person name="Fukuda S."/>
            <person name="Kanamori-Katayama M."/>
            <person name="Suzuki M."/>
            <person name="Aoki J."/>
            <person name="Arakawa T."/>
            <person name="Iida J."/>
            <person name="Imamura K."/>
            <person name="Itoh M."/>
            <person name="Kato T."/>
            <person name="Kawaji H."/>
            <person name="Kawagashira N."/>
            <person name="Kawashima T."/>
            <person name="Kojima M."/>
            <person name="Kondo S."/>
            <person name="Konno H."/>
            <person name="Nakano K."/>
            <person name="Ninomiya N."/>
            <person name="Nishio T."/>
            <person name="Okada M."/>
            <person name="Plessy C."/>
            <person name="Shibata K."/>
            <person name="Shiraki T."/>
            <person name="Suzuki S."/>
            <person name="Tagami M."/>
            <person name="Waki K."/>
            <person name="Watahiki A."/>
            <person name="Okamura-Oho Y."/>
            <person name="Suzuki H."/>
            <person name="Kawai J."/>
            <person name="Hayashizaki Y."/>
        </authorList>
    </citation>
    <scope>NUCLEOTIDE SEQUENCE [LARGE SCALE MRNA]</scope>
    <source>
        <strain>C57BL/6J</strain>
        <tissue>Hypothalamus</tissue>
    </source>
</reference>
<reference key="2">
    <citation type="journal article" date="2010" name="Cell">
        <title>A tissue-specific atlas of mouse protein phosphorylation and expression.</title>
        <authorList>
            <person name="Huttlin E.L."/>
            <person name="Jedrychowski M.P."/>
            <person name="Elias J.E."/>
            <person name="Goswami T."/>
            <person name="Rad R."/>
            <person name="Beausoleil S.A."/>
            <person name="Villen J."/>
            <person name="Haas W."/>
            <person name="Sowa M.E."/>
            <person name="Gygi S.P."/>
        </authorList>
    </citation>
    <scope>IDENTIFICATION BY MASS SPECTROMETRY [LARGE SCALE ANALYSIS]</scope>
    <source>
        <tissue>Brain</tissue>
        <tissue>Kidney</tissue>
        <tissue>Lung</tissue>
        <tissue>Spleen</tissue>
    </source>
</reference>
<proteinExistence type="evidence at protein level"/>
<protein>
    <recommendedName>
        <fullName>Rho-related GTP-binding protein RhoF</fullName>
    </recommendedName>
</protein>
<sequence>MDAPGAPAPAAAPSSARKELKIVIVGDGGCGKTSLLMVYCQGSFPEHYAPSVFEKYTASVTVGNKEVTLNLYDTAGQEDYDRLRPLSYQNTHLVLICYDVMNPTSYDNVLIKWFPEVTHFCRGIPTVLIGCKTDLRKDKEQLRKLRAAQLEPITYTQGLNACEQMRGALYLECSAKFRENVEDVFREAAKVALSALKKAQRQKKHRICLLL</sequence>
<dbReference type="EMBL" id="AK038837">
    <property type="protein sequence ID" value="BAC30145.1"/>
    <property type="molecule type" value="mRNA"/>
</dbReference>
<dbReference type="CCDS" id="CCDS39263.1"/>
<dbReference type="RefSeq" id="NP_780301.1">
    <property type="nucleotide sequence ID" value="NM_175092.3"/>
</dbReference>
<dbReference type="SMR" id="Q8BYP3"/>
<dbReference type="FunCoup" id="Q8BYP3">
    <property type="interactions" value="1150"/>
</dbReference>
<dbReference type="STRING" id="10090.ENSMUSP00000140177"/>
<dbReference type="PhosphoSitePlus" id="Q8BYP3"/>
<dbReference type="PaxDb" id="10090-ENSMUSP00000031401"/>
<dbReference type="ProteomicsDB" id="254879"/>
<dbReference type="Antibodypedia" id="31593">
    <property type="antibodies" value="247 antibodies from 28 providers"/>
</dbReference>
<dbReference type="DNASU" id="23912"/>
<dbReference type="Ensembl" id="ENSMUST00000031401.6">
    <property type="protein sequence ID" value="ENSMUSP00000031401.6"/>
    <property type="gene ID" value="ENSMUSG00000029449.12"/>
</dbReference>
<dbReference type="Ensembl" id="ENSMUST00000160479.8">
    <property type="protein sequence ID" value="ENSMUSP00000124866.2"/>
    <property type="gene ID" value="ENSMUSG00000029449.12"/>
</dbReference>
<dbReference type="Ensembl" id="ENSMUST00000186469.7">
    <property type="protein sequence ID" value="ENSMUSP00000140177.2"/>
    <property type="gene ID" value="ENSMUSG00000029449.12"/>
</dbReference>
<dbReference type="GeneID" id="23912"/>
<dbReference type="KEGG" id="mmu:23912"/>
<dbReference type="UCSC" id="uc008zne.1">
    <property type="organism name" value="mouse"/>
</dbReference>
<dbReference type="AGR" id="MGI:1345629"/>
<dbReference type="CTD" id="54509"/>
<dbReference type="MGI" id="MGI:1345629">
    <property type="gene designation" value="Rhof"/>
</dbReference>
<dbReference type="VEuPathDB" id="HostDB:ENSMUSG00000029449"/>
<dbReference type="eggNOG" id="KOG0393">
    <property type="taxonomic scope" value="Eukaryota"/>
</dbReference>
<dbReference type="GeneTree" id="ENSGT00940000158903"/>
<dbReference type="HOGENOM" id="CLU_041217_21_2_1"/>
<dbReference type="InParanoid" id="Q8BYP3"/>
<dbReference type="OMA" id="CSAKHQE"/>
<dbReference type="OrthoDB" id="8830751at2759"/>
<dbReference type="PhylomeDB" id="Q8BYP3"/>
<dbReference type="TreeFam" id="TF331746"/>
<dbReference type="Reactome" id="R-MMU-6798695">
    <property type="pathway name" value="Neutrophil degranulation"/>
</dbReference>
<dbReference type="Reactome" id="R-MMU-9035034">
    <property type="pathway name" value="RHOF GTPase cycle"/>
</dbReference>
<dbReference type="BioGRID-ORCS" id="23912">
    <property type="hits" value="3 hits in 77 CRISPR screens"/>
</dbReference>
<dbReference type="ChiTaRS" id="Rhof">
    <property type="organism name" value="mouse"/>
</dbReference>
<dbReference type="PRO" id="PR:Q8BYP3"/>
<dbReference type="Proteomes" id="UP000000589">
    <property type="component" value="Chromosome 5"/>
</dbReference>
<dbReference type="RNAct" id="Q8BYP3">
    <property type="molecule type" value="protein"/>
</dbReference>
<dbReference type="Bgee" id="ENSMUSG00000029449">
    <property type="expression patterns" value="Expressed in granulocyte and 133 other cell types or tissues"/>
</dbReference>
<dbReference type="ExpressionAtlas" id="Q8BYP3">
    <property type="expression patterns" value="baseline and differential"/>
</dbReference>
<dbReference type="GO" id="GO:0005737">
    <property type="term" value="C:cytoplasm"/>
    <property type="evidence" value="ECO:0007669"/>
    <property type="project" value="UniProtKB-KW"/>
</dbReference>
<dbReference type="GO" id="GO:0005856">
    <property type="term" value="C:cytoskeleton"/>
    <property type="evidence" value="ECO:0007669"/>
    <property type="project" value="UniProtKB-SubCell"/>
</dbReference>
<dbReference type="GO" id="GO:0005886">
    <property type="term" value="C:plasma membrane"/>
    <property type="evidence" value="ECO:0007669"/>
    <property type="project" value="UniProtKB-SubCell"/>
</dbReference>
<dbReference type="GO" id="GO:0005525">
    <property type="term" value="F:GTP binding"/>
    <property type="evidence" value="ECO:0007669"/>
    <property type="project" value="UniProtKB-KW"/>
</dbReference>
<dbReference type="GO" id="GO:0003924">
    <property type="term" value="F:GTPase activity"/>
    <property type="evidence" value="ECO:0007669"/>
    <property type="project" value="InterPro"/>
</dbReference>
<dbReference type="GO" id="GO:0007015">
    <property type="term" value="P:actin filament organization"/>
    <property type="evidence" value="ECO:0007669"/>
    <property type="project" value="Ensembl"/>
</dbReference>
<dbReference type="GO" id="GO:0007264">
    <property type="term" value="P:small GTPase-mediated signal transduction"/>
    <property type="evidence" value="ECO:0007669"/>
    <property type="project" value="InterPro"/>
</dbReference>
<dbReference type="CDD" id="cd04132">
    <property type="entry name" value="Rho4_like"/>
    <property type="match status" value="1"/>
</dbReference>
<dbReference type="FunFam" id="3.40.50.300:FF:000676">
    <property type="entry name" value="Ras homolog family member F"/>
    <property type="match status" value="1"/>
</dbReference>
<dbReference type="Gene3D" id="3.40.50.300">
    <property type="entry name" value="P-loop containing nucleotide triphosphate hydrolases"/>
    <property type="match status" value="1"/>
</dbReference>
<dbReference type="InterPro" id="IPR027417">
    <property type="entry name" value="P-loop_NTPase"/>
</dbReference>
<dbReference type="InterPro" id="IPR005225">
    <property type="entry name" value="Small_GTP-bd"/>
</dbReference>
<dbReference type="InterPro" id="IPR001806">
    <property type="entry name" value="Small_GTPase"/>
</dbReference>
<dbReference type="InterPro" id="IPR003578">
    <property type="entry name" value="Small_GTPase_Rho"/>
</dbReference>
<dbReference type="NCBIfam" id="TIGR00231">
    <property type="entry name" value="small_GTP"/>
    <property type="match status" value="1"/>
</dbReference>
<dbReference type="PANTHER" id="PTHR24072">
    <property type="entry name" value="RHO FAMILY GTPASE"/>
    <property type="match status" value="1"/>
</dbReference>
<dbReference type="Pfam" id="PF00071">
    <property type="entry name" value="Ras"/>
    <property type="match status" value="1"/>
</dbReference>
<dbReference type="PRINTS" id="PR00449">
    <property type="entry name" value="RASTRNSFRMNG"/>
</dbReference>
<dbReference type="SMART" id="SM00175">
    <property type="entry name" value="RAB"/>
    <property type="match status" value="1"/>
</dbReference>
<dbReference type="SMART" id="SM00176">
    <property type="entry name" value="RAN"/>
    <property type="match status" value="1"/>
</dbReference>
<dbReference type="SMART" id="SM00173">
    <property type="entry name" value="RAS"/>
    <property type="match status" value="1"/>
</dbReference>
<dbReference type="SMART" id="SM00174">
    <property type="entry name" value="RHO"/>
    <property type="match status" value="1"/>
</dbReference>
<dbReference type="SUPFAM" id="SSF52540">
    <property type="entry name" value="P-loop containing nucleoside triphosphate hydrolases"/>
    <property type="match status" value="1"/>
</dbReference>
<dbReference type="PROSITE" id="PS51420">
    <property type="entry name" value="RHO"/>
    <property type="match status" value="1"/>
</dbReference>
<gene>
    <name type="primary">Rhof</name>
    <name type="synonym">Arhf</name>
</gene>
<organism>
    <name type="scientific">Mus musculus</name>
    <name type="common">Mouse</name>
    <dbReference type="NCBI Taxonomy" id="10090"/>
    <lineage>
        <taxon>Eukaryota</taxon>
        <taxon>Metazoa</taxon>
        <taxon>Chordata</taxon>
        <taxon>Craniata</taxon>
        <taxon>Vertebrata</taxon>
        <taxon>Euteleostomi</taxon>
        <taxon>Mammalia</taxon>
        <taxon>Eutheria</taxon>
        <taxon>Euarchontoglires</taxon>
        <taxon>Glires</taxon>
        <taxon>Rodentia</taxon>
        <taxon>Myomorpha</taxon>
        <taxon>Muroidea</taxon>
        <taxon>Muridae</taxon>
        <taxon>Murinae</taxon>
        <taxon>Mus</taxon>
        <taxon>Mus</taxon>
    </lineage>
</organism>
<comment type="function">
    <text evidence="1">Plasma membrane-associated small GTPase which cycles between an active GTP-bound and an inactive GDP-bound state. Causes the formation of thin, actin-rich surface projections called filopodia. Functions cooperatively with CDC42 and Rac to generate additional structures, increasing the diversity of actin-based morphology (By similarity).</text>
</comment>
<comment type="subcellular location">
    <subcellularLocation>
        <location evidence="4">Cell membrane</location>
        <topology evidence="4">Lipid-anchor</topology>
        <orientation evidence="4">Cytoplasmic side</orientation>
    </subcellularLocation>
    <subcellularLocation>
        <location>Cytoplasm</location>
        <location>Cytoskeleton</location>
    </subcellularLocation>
</comment>
<comment type="similarity">
    <text evidence="4">Belongs to the small GTPase superfamily. Rho family.</text>
</comment>
<evidence type="ECO:0000250" key="1"/>
<evidence type="ECO:0000250" key="2">
    <source>
        <dbReference type="UniProtKB" id="Q9HBH0"/>
    </source>
</evidence>
<evidence type="ECO:0000255" key="3"/>
<evidence type="ECO:0000305" key="4"/>
<feature type="chain" id="PRO_0000198866" description="Rho-related GTP-binding protein RhoF">
    <location>
        <begin position="1"/>
        <end position="208"/>
    </location>
</feature>
<feature type="propeptide" id="PRO_0000281217" description="Removed in mature form" evidence="3">
    <location>
        <begin position="209"/>
        <end position="211"/>
    </location>
</feature>
<feature type="short sequence motif" description="Effector region" evidence="3">
    <location>
        <begin position="48"/>
        <end position="56"/>
    </location>
</feature>
<feature type="binding site" evidence="1">
    <location>
        <begin position="26"/>
        <end position="33"/>
    </location>
    <ligand>
        <name>GTP</name>
        <dbReference type="ChEBI" id="CHEBI:37565"/>
    </ligand>
</feature>
<feature type="binding site" evidence="1">
    <location>
        <begin position="73"/>
        <end position="77"/>
    </location>
    <ligand>
        <name>GTP</name>
        <dbReference type="ChEBI" id="CHEBI:37565"/>
    </ligand>
</feature>
<feature type="binding site" evidence="1">
    <location>
        <begin position="131"/>
        <end position="134"/>
    </location>
    <ligand>
        <name>GTP</name>
        <dbReference type="ChEBI" id="CHEBI:37565"/>
    </ligand>
</feature>
<feature type="modified residue" description="N-acetylmethionine" evidence="2">
    <location>
        <position position="1"/>
    </location>
</feature>
<feature type="modified residue" description="Cysteine methyl ester" evidence="3">
    <location>
        <position position="208"/>
    </location>
</feature>
<feature type="lipid moiety-binding region" description="S-geranylgeranyl cysteine" evidence="3">
    <location>
        <position position="208"/>
    </location>
</feature>
<keyword id="KW-0007">Acetylation</keyword>
<keyword id="KW-1003">Cell membrane</keyword>
<keyword id="KW-0963">Cytoplasm</keyword>
<keyword id="KW-0206">Cytoskeleton</keyword>
<keyword id="KW-0342">GTP-binding</keyword>
<keyword id="KW-0449">Lipoprotein</keyword>
<keyword id="KW-0472">Membrane</keyword>
<keyword id="KW-0488">Methylation</keyword>
<keyword id="KW-0547">Nucleotide-binding</keyword>
<keyword id="KW-0636">Prenylation</keyword>
<keyword id="KW-1185">Reference proteome</keyword>